<gene>
    <name evidence="1" type="primary">thrS</name>
    <name type="ordered locus">M28_Spy0415</name>
</gene>
<proteinExistence type="inferred from homology"/>
<comment type="function">
    <text evidence="1">Catalyzes the attachment of threonine to tRNA(Thr) in a two-step reaction: L-threonine is first activated by ATP to form Thr-AMP and then transferred to the acceptor end of tRNA(Thr). Also edits incorrectly charged L-seryl-tRNA(Thr).</text>
</comment>
<comment type="catalytic activity">
    <reaction evidence="1">
        <text>tRNA(Thr) + L-threonine + ATP = L-threonyl-tRNA(Thr) + AMP + diphosphate + H(+)</text>
        <dbReference type="Rhea" id="RHEA:24624"/>
        <dbReference type="Rhea" id="RHEA-COMP:9670"/>
        <dbReference type="Rhea" id="RHEA-COMP:9704"/>
        <dbReference type="ChEBI" id="CHEBI:15378"/>
        <dbReference type="ChEBI" id="CHEBI:30616"/>
        <dbReference type="ChEBI" id="CHEBI:33019"/>
        <dbReference type="ChEBI" id="CHEBI:57926"/>
        <dbReference type="ChEBI" id="CHEBI:78442"/>
        <dbReference type="ChEBI" id="CHEBI:78534"/>
        <dbReference type="ChEBI" id="CHEBI:456215"/>
        <dbReference type="EC" id="6.1.1.3"/>
    </reaction>
</comment>
<comment type="cofactor">
    <cofactor evidence="1">
        <name>Zn(2+)</name>
        <dbReference type="ChEBI" id="CHEBI:29105"/>
    </cofactor>
    <text evidence="1">Binds 1 zinc ion per subunit.</text>
</comment>
<comment type="subunit">
    <text evidence="1">Homodimer.</text>
</comment>
<comment type="subcellular location">
    <subcellularLocation>
        <location evidence="1">Cytoplasm</location>
    </subcellularLocation>
</comment>
<comment type="similarity">
    <text evidence="1">Belongs to the class-II aminoacyl-tRNA synthetase family.</text>
</comment>
<dbReference type="EC" id="6.1.1.3" evidence="1"/>
<dbReference type="EMBL" id="CP000056">
    <property type="protein sequence ID" value="AAX71529.1"/>
    <property type="molecule type" value="Genomic_DNA"/>
</dbReference>
<dbReference type="RefSeq" id="WP_011284591.1">
    <property type="nucleotide sequence ID" value="NC_007296.2"/>
</dbReference>
<dbReference type="SMR" id="Q48US7"/>
<dbReference type="KEGG" id="spb:M28_Spy0415"/>
<dbReference type="HOGENOM" id="CLU_008554_0_1_9"/>
<dbReference type="GO" id="GO:0005737">
    <property type="term" value="C:cytoplasm"/>
    <property type="evidence" value="ECO:0007669"/>
    <property type="project" value="UniProtKB-SubCell"/>
</dbReference>
<dbReference type="GO" id="GO:0005524">
    <property type="term" value="F:ATP binding"/>
    <property type="evidence" value="ECO:0007669"/>
    <property type="project" value="UniProtKB-UniRule"/>
</dbReference>
<dbReference type="GO" id="GO:0140096">
    <property type="term" value="F:catalytic activity, acting on a protein"/>
    <property type="evidence" value="ECO:0007669"/>
    <property type="project" value="UniProtKB-ARBA"/>
</dbReference>
<dbReference type="GO" id="GO:0046872">
    <property type="term" value="F:metal ion binding"/>
    <property type="evidence" value="ECO:0007669"/>
    <property type="project" value="UniProtKB-KW"/>
</dbReference>
<dbReference type="GO" id="GO:0004829">
    <property type="term" value="F:threonine-tRNA ligase activity"/>
    <property type="evidence" value="ECO:0007669"/>
    <property type="project" value="UniProtKB-UniRule"/>
</dbReference>
<dbReference type="GO" id="GO:0016740">
    <property type="term" value="F:transferase activity"/>
    <property type="evidence" value="ECO:0007669"/>
    <property type="project" value="UniProtKB-ARBA"/>
</dbReference>
<dbReference type="GO" id="GO:0000049">
    <property type="term" value="F:tRNA binding"/>
    <property type="evidence" value="ECO:0007669"/>
    <property type="project" value="UniProtKB-KW"/>
</dbReference>
<dbReference type="GO" id="GO:0006435">
    <property type="term" value="P:threonyl-tRNA aminoacylation"/>
    <property type="evidence" value="ECO:0007669"/>
    <property type="project" value="UniProtKB-UniRule"/>
</dbReference>
<dbReference type="CDD" id="cd01667">
    <property type="entry name" value="TGS_ThrRS"/>
    <property type="match status" value="1"/>
</dbReference>
<dbReference type="CDD" id="cd00860">
    <property type="entry name" value="ThrRS_anticodon"/>
    <property type="match status" value="1"/>
</dbReference>
<dbReference type="CDD" id="cd00771">
    <property type="entry name" value="ThrRS_core"/>
    <property type="match status" value="1"/>
</dbReference>
<dbReference type="FunFam" id="3.10.20.30:FF:000005">
    <property type="entry name" value="Threonine--tRNA ligase"/>
    <property type="match status" value="1"/>
</dbReference>
<dbReference type="FunFam" id="3.30.54.20:FF:000002">
    <property type="entry name" value="Threonine--tRNA ligase"/>
    <property type="match status" value="1"/>
</dbReference>
<dbReference type="FunFam" id="3.30.930.10:FF:000002">
    <property type="entry name" value="Threonine--tRNA ligase"/>
    <property type="match status" value="1"/>
</dbReference>
<dbReference type="FunFam" id="3.40.50.800:FF:000001">
    <property type="entry name" value="Threonine--tRNA ligase"/>
    <property type="match status" value="1"/>
</dbReference>
<dbReference type="FunFam" id="3.30.980.10:FF:000005">
    <property type="entry name" value="Threonyl-tRNA synthetase, mitochondrial"/>
    <property type="match status" value="1"/>
</dbReference>
<dbReference type="Gene3D" id="3.10.20.30">
    <property type="match status" value="1"/>
</dbReference>
<dbReference type="Gene3D" id="3.30.54.20">
    <property type="match status" value="1"/>
</dbReference>
<dbReference type="Gene3D" id="3.40.50.800">
    <property type="entry name" value="Anticodon-binding domain"/>
    <property type="match status" value="1"/>
</dbReference>
<dbReference type="Gene3D" id="3.30.930.10">
    <property type="entry name" value="Bira Bifunctional Protein, Domain 2"/>
    <property type="match status" value="1"/>
</dbReference>
<dbReference type="Gene3D" id="3.30.980.10">
    <property type="entry name" value="Threonyl-trna Synthetase, Chain A, domain 2"/>
    <property type="match status" value="1"/>
</dbReference>
<dbReference type="HAMAP" id="MF_00184">
    <property type="entry name" value="Thr_tRNA_synth"/>
    <property type="match status" value="1"/>
</dbReference>
<dbReference type="InterPro" id="IPR002314">
    <property type="entry name" value="aa-tRNA-synt_IIb"/>
</dbReference>
<dbReference type="InterPro" id="IPR006195">
    <property type="entry name" value="aa-tRNA-synth_II"/>
</dbReference>
<dbReference type="InterPro" id="IPR045864">
    <property type="entry name" value="aa-tRNA-synth_II/BPL/LPL"/>
</dbReference>
<dbReference type="InterPro" id="IPR004154">
    <property type="entry name" value="Anticodon-bd"/>
</dbReference>
<dbReference type="InterPro" id="IPR036621">
    <property type="entry name" value="Anticodon-bd_dom_sf"/>
</dbReference>
<dbReference type="InterPro" id="IPR012675">
    <property type="entry name" value="Beta-grasp_dom_sf"/>
</dbReference>
<dbReference type="InterPro" id="IPR004095">
    <property type="entry name" value="TGS"/>
</dbReference>
<dbReference type="InterPro" id="IPR012676">
    <property type="entry name" value="TGS-like"/>
</dbReference>
<dbReference type="InterPro" id="IPR002320">
    <property type="entry name" value="Thr-tRNA-ligase_IIa"/>
</dbReference>
<dbReference type="InterPro" id="IPR018163">
    <property type="entry name" value="Thr/Ala-tRNA-synth_IIc_edit"/>
</dbReference>
<dbReference type="InterPro" id="IPR047246">
    <property type="entry name" value="ThrRS_anticodon"/>
</dbReference>
<dbReference type="InterPro" id="IPR033728">
    <property type="entry name" value="ThrRS_core"/>
</dbReference>
<dbReference type="InterPro" id="IPR012947">
    <property type="entry name" value="tRNA_SAD"/>
</dbReference>
<dbReference type="NCBIfam" id="TIGR00418">
    <property type="entry name" value="thrS"/>
    <property type="match status" value="1"/>
</dbReference>
<dbReference type="PANTHER" id="PTHR11451:SF56">
    <property type="entry name" value="THREONINE--TRNA LIGASE 1"/>
    <property type="match status" value="1"/>
</dbReference>
<dbReference type="PANTHER" id="PTHR11451">
    <property type="entry name" value="THREONINE-TRNA LIGASE"/>
    <property type="match status" value="1"/>
</dbReference>
<dbReference type="Pfam" id="PF03129">
    <property type="entry name" value="HGTP_anticodon"/>
    <property type="match status" value="1"/>
</dbReference>
<dbReference type="Pfam" id="PF02824">
    <property type="entry name" value="TGS"/>
    <property type="match status" value="1"/>
</dbReference>
<dbReference type="Pfam" id="PF00587">
    <property type="entry name" value="tRNA-synt_2b"/>
    <property type="match status" value="1"/>
</dbReference>
<dbReference type="Pfam" id="PF07973">
    <property type="entry name" value="tRNA_SAD"/>
    <property type="match status" value="1"/>
</dbReference>
<dbReference type="PRINTS" id="PR01047">
    <property type="entry name" value="TRNASYNTHTHR"/>
</dbReference>
<dbReference type="SMART" id="SM00863">
    <property type="entry name" value="tRNA_SAD"/>
    <property type="match status" value="1"/>
</dbReference>
<dbReference type="SUPFAM" id="SSF52954">
    <property type="entry name" value="Class II aaRS ABD-related"/>
    <property type="match status" value="1"/>
</dbReference>
<dbReference type="SUPFAM" id="SSF55681">
    <property type="entry name" value="Class II aaRS and biotin synthetases"/>
    <property type="match status" value="1"/>
</dbReference>
<dbReference type="SUPFAM" id="SSF81271">
    <property type="entry name" value="TGS-like"/>
    <property type="match status" value="1"/>
</dbReference>
<dbReference type="SUPFAM" id="SSF55186">
    <property type="entry name" value="ThrRS/AlaRS common domain"/>
    <property type="match status" value="1"/>
</dbReference>
<dbReference type="PROSITE" id="PS50862">
    <property type="entry name" value="AA_TRNA_LIGASE_II"/>
    <property type="match status" value="1"/>
</dbReference>
<dbReference type="PROSITE" id="PS51880">
    <property type="entry name" value="TGS"/>
    <property type="match status" value="1"/>
</dbReference>
<organism>
    <name type="scientific">Streptococcus pyogenes serotype M28 (strain MGAS6180)</name>
    <dbReference type="NCBI Taxonomy" id="319701"/>
    <lineage>
        <taxon>Bacteria</taxon>
        <taxon>Bacillati</taxon>
        <taxon>Bacillota</taxon>
        <taxon>Bacilli</taxon>
        <taxon>Lactobacillales</taxon>
        <taxon>Streptococcaceae</taxon>
        <taxon>Streptococcus</taxon>
    </lineage>
</organism>
<feature type="chain" id="PRO_1000020532" description="Threonine--tRNA ligase">
    <location>
        <begin position="1"/>
        <end position="647"/>
    </location>
</feature>
<feature type="domain" description="TGS" evidence="2">
    <location>
        <begin position="1"/>
        <end position="61"/>
    </location>
</feature>
<feature type="region of interest" description="Catalytic" evidence="1">
    <location>
        <begin position="240"/>
        <end position="538"/>
    </location>
</feature>
<feature type="binding site" evidence="1">
    <location>
        <position position="334"/>
    </location>
    <ligand>
        <name>Zn(2+)</name>
        <dbReference type="ChEBI" id="CHEBI:29105"/>
    </ligand>
</feature>
<feature type="binding site" evidence="1">
    <location>
        <position position="385"/>
    </location>
    <ligand>
        <name>Zn(2+)</name>
        <dbReference type="ChEBI" id="CHEBI:29105"/>
    </ligand>
</feature>
<feature type="binding site" evidence="1">
    <location>
        <position position="515"/>
    </location>
    <ligand>
        <name>Zn(2+)</name>
        <dbReference type="ChEBI" id="CHEBI:29105"/>
    </ligand>
</feature>
<protein>
    <recommendedName>
        <fullName evidence="1">Threonine--tRNA ligase</fullName>
        <ecNumber evidence="1">6.1.1.3</ecNumber>
    </recommendedName>
    <alternativeName>
        <fullName evidence="1">Threonyl-tRNA synthetase</fullName>
        <shortName evidence="1">ThrRS</shortName>
    </alternativeName>
</protein>
<keyword id="KW-0030">Aminoacyl-tRNA synthetase</keyword>
<keyword id="KW-0067">ATP-binding</keyword>
<keyword id="KW-0963">Cytoplasm</keyword>
<keyword id="KW-0436">Ligase</keyword>
<keyword id="KW-0479">Metal-binding</keyword>
<keyword id="KW-0547">Nucleotide-binding</keyword>
<keyword id="KW-0648">Protein biosynthesis</keyword>
<keyword id="KW-0694">RNA-binding</keyword>
<keyword id="KW-0820">tRNA-binding</keyword>
<keyword id="KW-0862">Zinc</keyword>
<evidence type="ECO:0000255" key="1">
    <source>
        <dbReference type="HAMAP-Rule" id="MF_00184"/>
    </source>
</evidence>
<evidence type="ECO:0000255" key="2">
    <source>
        <dbReference type="PROSITE-ProRule" id="PRU01228"/>
    </source>
</evidence>
<name>SYT_STRPM</name>
<reference key="1">
    <citation type="journal article" date="2005" name="J. Infect. Dis.">
        <title>Genome sequence of a serotype M28 strain of group A Streptococcus: potential new insights into puerperal sepsis and bacterial disease specificity.</title>
        <authorList>
            <person name="Green N.M."/>
            <person name="Zhang S."/>
            <person name="Porcella S.F."/>
            <person name="Nagiec M.J."/>
            <person name="Barbian K.D."/>
            <person name="Beres S.B."/>
            <person name="Lefebvre R.B."/>
            <person name="Musser J.M."/>
        </authorList>
    </citation>
    <scope>NUCLEOTIDE SEQUENCE [LARGE SCALE GENOMIC DNA]</scope>
    <source>
        <strain>MGAS6180</strain>
    </source>
</reference>
<accession>Q48US7</accession>
<sequence>MIKITFPDGAVREFESGVTTFDIAESISKSLAKKALAGKFNDQLIDTTRAIEEDGSIEIVTPDHKDAYEVLRHSAAHLFAQAAKRLFPNLHLGVGPAIAEGFYYDTDNAEGQISNEDLPRIEAEMQKIVTENYPCIREEVTKEEALELFKDDPYKVELINEHAGAGLTVYRQGEFVDLCRGPHVPSTGRIQVFHLLNVAGAYWRGNSDNNMMQRIYGTAWFDKKDLKAYLTRLEEAKERDHRKLGKELDLFMISQEVGQGLPFWLPDGATIRRTLERYITDKELASGYQHVYTPPLASVELYKTSGHWDHYQEDMFPVMDMGDGEEFVLRPMNCPHHIQVYKNHVRSYRELPIRIAELGMMHRYEKSGALSGLQRVREMTLNDGHIFVTPEQIQEEFQRALQLIIDVYADFNLTDYRFRLSYRDPNDTRKYYDNDEMWENAQSMLKAALDEMGVDYFEAEGEAAFYGPKLDIQVKTALGNEETLSTIQLDFLLPERFDLKYIGADGEEHRPVMIHRGVISTMERFTAILIETYKGAFPTWLAPHQVTVIPISNEAHIDYAWEVAKTLRDRGVRADVDDRNEKMQYKIRASQTSKIPYQLIVGDKEMEDKSVNVRRYGSKATHTESVEEFVENILADIARKSCPDAQA</sequence>